<protein>
    <recommendedName>
        <fullName evidence="1">Maturase K</fullName>
    </recommendedName>
    <alternativeName>
        <fullName evidence="1">Intron maturase</fullName>
    </alternativeName>
</protein>
<comment type="function">
    <text evidence="1">Usually encoded in the trnK tRNA gene intron. Probably assists in splicing its own and other chloroplast group II introns.</text>
</comment>
<comment type="subcellular location">
    <subcellularLocation>
        <location>Plastid</location>
        <location>Chloroplast</location>
    </subcellularLocation>
</comment>
<comment type="similarity">
    <text evidence="1">Belongs to the intron maturase 2 family. MatK subfamily.</text>
</comment>
<evidence type="ECO:0000255" key="1">
    <source>
        <dbReference type="HAMAP-Rule" id="MF_01390"/>
    </source>
</evidence>
<sequence length="515" mass="61075">MDEFHRNGKEDSSWQQCFLYPLFFQEDLYAIYHDHYLDGSSSSEPMEHVSSNDQFSFLTVKRLIGQIRQQNHSIVLFVNCDPNPLVERNKSSYYESVLEGLTLVLEVPFSIRSKYSVEGINEWKSFRSIHSIFPFLEDKFPHSNYISDTRIPYSIHPEILVRTFRRWIRDAPSLHPLRSVLYEYRNSPENLQRSIIVAPRVNTRFFLFLWNHYVYECESILVPLLKRSSHLRSLSHGSFPERTHFDRKIKHIIIFSRRNSLKRIWSLKDPNIHYFRYGERSIIAIKGTHLLVKKCRYHLPIFRQCYFHLWSEPYRVCSHQLSKNCSSSLGYFLRIRMKPLLVRTKMLDELFIADLITGEFDPIVPIVPIIGLLAREKFCDISGRPISKLSWTSLTDDDILDRFDRIWRNLFHYYSGSFGRDGLYRIKYILSLSCAKTLACKHKSTIRVVRKELGPELFKKSFSKEREFDSPPFSSKAAARSQRERIWHSDIPQINPLANSWQKIQDLKIENLFDQ</sequence>
<geneLocation type="chloroplast"/>
<gene>
    <name evidence="1" type="primary">matK</name>
</gene>
<accession>Q7IJL0</accession>
<proteinExistence type="inferred from homology"/>
<feature type="chain" id="PRO_0000143456" description="Maturase K">
    <location>
        <begin position="1"/>
        <end position="515"/>
    </location>
</feature>
<organism>
    <name type="scientific">Larix laricina</name>
    <name type="common">Tamarack</name>
    <name type="synonym">Pinus laricina</name>
    <dbReference type="NCBI Taxonomy" id="3326"/>
    <lineage>
        <taxon>Eukaryota</taxon>
        <taxon>Viridiplantae</taxon>
        <taxon>Streptophyta</taxon>
        <taxon>Embryophyta</taxon>
        <taxon>Tracheophyta</taxon>
        <taxon>Spermatophyta</taxon>
        <taxon>Pinopsida</taxon>
        <taxon>Pinidae</taxon>
        <taxon>Conifers I</taxon>
        <taxon>Pinales</taxon>
        <taxon>Pinaceae</taxon>
        <taxon>Larix</taxon>
    </lineage>
</organism>
<keyword id="KW-0150">Chloroplast</keyword>
<keyword id="KW-0507">mRNA processing</keyword>
<keyword id="KW-0934">Plastid</keyword>
<keyword id="KW-0694">RNA-binding</keyword>
<keyword id="KW-0819">tRNA processing</keyword>
<dbReference type="EMBL" id="AF295029">
    <property type="protein sequence ID" value="AAM82352.1"/>
    <property type="molecule type" value="Genomic_DNA"/>
</dbReference>
<dbReference type="GO" id="GO:0009507">
    <property type="term" value="C:chloroplast"/>
    <property type="evidence" value="ECO:0007669"/>
    <property type="project" value="UniProtKB-SubCell"/>
</dbReference>
<dbReference type="GO" id="GO:0003723">
    <property type="term" value="F:RNA binding"/>
    <property type="evidence" value="ECO:0007669"/>
    <property type="project" value="UniProtKB-KW"/>
</dbReference>
<dbReference type="GO" id="GO:0006397">
    <property type="term" value="P:mRNA processing"/>
    <property type="evidence" value="ECO:0007669"/>
    <property type="project" value="UniProtKB-KW"/>
</dbReference>
<dbReference type="GO" id="GO:0008380">
    <property type="term" value="P:RNA splicing"/>
    <property type="evidence" value="ECO:0007669"/>
    <property type="project" value="UniProtKB-UniRule"/>
</dbReference>
<dbReference type="GO" id="GO:0008033">
    <property type="term" value="P:tRNA processing"/>
    <property type="evidence" value="ECO:0007669"/>
    <property type="project" value="UniProtKB-KW"/>
</dbReference>
<dbReference type="HAMAP" id="MF_01390">
    <property type="entry name" value="MatK"/>
    <property type="match status" value="1"/>
</dbReference>
<dbReference type="InterPro" id="IPR024937">
    <property type="entry name" value="Domain_X"/>
</dbReference>
<dbReference type="InterPro" id="IPR002866">
    <property type="entry name" value="Maturase_MatK"/>
</dbReference>
<dbReference type="InterPro" id="IPR024942">
    <property type="entry name" value="Maturase_MatK_N"/>
</dbReference>
<dbReference type="PANTHER" id="PTHR34811">
    <property type="entry name" value="MATURASE K"/>
    <property type="match status" value="1"/>
</dbReference>
<dbReference type="PANTHER" id="PTHR34811:SF1">
    <property type="entry name" value="MATURASE K"/>
    <property type="match status" value="1"/>
</dbReference>
<dbReference type="Pfam" id="PF01348">
    <property type="entry name" value="Intron_maturas2"/>
    <property type="match status" value="1"/>
</dbReference>
<dbReference type="Pfam" id="PF01824">
    <property type="entry name" value="MatK_N"/>
    <property type="match status" value="1"/>
</dbReference>
<name>MATK_LARLA</name>
<reference key="1">
    <citation type="submission" date="2000-08" db="EMBL/GenBank/DDBJ databases">
        <title>A re-evaluation of phylogeny in Pinaceae inferred from two genomes.</title>
        <authorList>
            <person name="Chaw S.-M."/>
        </authorList>
    </citation>
    <scope>NUCLEOTIDE SEQUENCE [GENOMIC DNA]</scope>
</reference>